<keyword id="KW-0687">Ribonucleoprotein</keyword>
<keyword id="KW-0689">Ribosomal protein</keyword>
<keyword id="KW-0694">RNA-binding</keyword>
<keyword id="KW-0699">rRNA-binding</keyword>
<keyword id="KW-0820">tRNA-binding</keyword>
<dbReference type="EMBL" id="CP000825">
    <property type="protein sequence ID" value="ABV51422.1"/>
    <property type="molecule type" value="Genomic_DNA"/>
</dbReference>
<dbReference type="RefSeq" id="WP_002807728.1">
    <property type="nucleotide sequence ID" value="NC_009840.1"/>
</dbReference>
<dbReference type="SMR" id="A8G741"/>
<dbReference type="STRING" id="93060.P9215_18091"/>
<dbReference type="KEGG" id="pmh:P9215_18091"/>
<dbReference type="eggNOG" id="COG0099">
    <property type="taxonomic scope" value="Bacteria"/>
</dbReference>
<dbReference type="HOGENOM" id="CLU_103849_1_2_3"/>
<dbReference type="OrthoDB" id="9803610at2"/>
<dbReference type="Proteomes" id="UP000002014">
    <property type="component" value="Chromosome"/>
</dbReference>
<dbReference type="GO" id="GO:0005829">
    <property type="term" value="C:cytosol"/>
    <property type="evidence" value="ECO:0007669"/>
    <property type="project" value="TreeGrafter"/>
</dbReference>
<dbReference type="GO" id="GO:0015935">
    <property type="term" value="C:small ribosomal subunit"/>
    <property type="evidence" value="ECO:0007669"/>
    <property type="project" value="TreeGrafter"/>
</dbReference>
<dbReference type="GO" id="GO:0019843">
    <property type="term" value="F:rRNA binding"/>
    <property type="evidence" value="ECO:0007669"/>
    <property type="project" value="UniProtKB-UniRule"/>
</dbReference>
<dbReference type="GO" id="GO:0003735">
    <property type="term" value="F:structural constituent of ribosome"/>
    <property type="evidence" value="ECO:0007669"/>
    <property type="project" value="InterPro"/>
</dbReference>
<dbReference type="GO" id="GO:0000049">
    <property type="term" value="F:tRNA binding"/>
    <property type="evidence" value="ECO:0007669"/>
    <property type="project" value="UniProtKB-UniRule"/>
</dbReference>
<dbReference type="GO" id="GO:0006412">
    <property type="term" value="P:translation"/>
    <property type="evidence" value="ECO:0007669"/>
    <property type="project" value="UniProtKB-UniRule"/>
</dbReference>
<dbReference type="FunFam" id="1.10.8.50:FF:000001">
    <property type="entry name" value="30S ribosomal protein S13"/>
    <property type="match status" value="1"/>
</dbReference>
<dbReference type="Gene3D" id="1.10.8.50">
    <property type="match status" value="1"/>
</dbReference>
<dbReference type="Gene3D" id="4.10.910.10">
    <property type="entry name" value="30s ribosomal protein s13, domain 2"/>
    <property type="match status" value="1"/>
</dbReference>
<dbReference type="HAMAP" id="MF_01315">
    <property type="entry name" value="Ribosomal_uS13"/>
    <property type="match status" value="1"/>
</dbReference>
<dbReference type="InterPro" id="IPR027437">
    <property type="entry name" value="Rbsml_uS13_C"/>
</dbReference>
<dbReference type="InterPro" id="IPR001892">
    <property type="entry name" value="Ribosomal_uS13"/>
</dbReference>
<dbReference type="InterPro" id="IPR010979">
    <property type="entry name" value="Ribosomal_uS13-like_H2TH"/>
</dbReference>
<dbReference type="InterPro" id="IPR019980">
    <property type="entry name" value="Ribosomal_uS13_bac-type"/>
</dbReference>
<dbReference type="InterPro" id="IPR018269">
    <property type="entry name" value="Ribosomal_uS13_CS"/>
</dbReference>
<dbReference type="NCBIfam" id="TIGR03631">
    <property type="entry name" value="uS13_bact"/>
    <property type="match status" value="1"/>
</dbReference>
<dbReference type="PANTHER" id="PTHR10871">
    <property type="entry name" value="30S RIBOSOMAL PROTEIN S13/40S RIBOSOMAL PROTEIN S18"/>
    <property type="match status" value="1"/>
</dbReference>
<dbReference type="PANTHER" id="PTHR10871:SF1">
    <property type="entry name" value="SMALL RIBOSOMAL SUBUNIT PROTEIN US13M"/>
    <property type="match status" value="1"/>
</dbReference>
<dbReference type="Pfam" id="PF00416">
    <property type="entry name" value="Ribosomal_S13"/>
    <property type="match status" value="1"/>
</dbReference>
<dbReference type="PIRSF" id="PIRSF002134">
    <property type="entry name" value="Ribosomal_S13"/>
    <property type="match status" value="1"/>
</dbReference>
<dbReference type="SUPFAM" id="SSF46946">
    <property type="entry name" value="S13-like H2TH domain"/>
    <property type="match status" value="1"/>
</dbReference>
<dbReference type="PROSITE" id="PS00646">
    <property type="entry name" value="RIBOSOMAL_S13_1"/>
    <property type="match status" value="1"/>
</dbReference>
<dbReference type="PROSITE" id="PS50159">
    <property type="entry name" value="RIBOSOMAL_S13_2"/>
    <property type="match status" value="1"/>
</dbReference>
<proteinExistence type="inferred from homology"/>
<comment type="function">
    <text evidence="1">Located at the top of the head of the 30S subunit, it contacts several helices of the 16S rRNA. In the 70S ribosome it contacts the 23S rRNA (bridge B1a) and protein L5 of the 50S subunit (bridge B1b), connecting the 2 subunits; these bridges are implicated in subunit movement. Contacts the tRNAs in the A and P-sites.</text>
</comment>
<comment type="subunit">
    <text evidence="1">Part of the 30S ribosomal subunit. Forms a loose heterodimer with protein S19. Forms two bridges to the 50S subunit in the 70S ribosome.</text>
</comment>
<comment type="similarity">
    <text evidence="1">Belongs to the universal ribosomal protein uS13 family.</text>
</comment>
<sequence length="121" mass="13687">MARIAGIDIPREKRVEIALTYVYGIGLTRSKLILANTGVNPDTRVKDLSDSDVQKLRGATEEFTLEGDLRRKEGMALKRLQDIGCVRGRRHRMSLPVRGQRTRTNARTRRGSRKTVAGRKK</sequence>
<name>RS13_PROM2</name>
<gene>
    <name evidence="1" type="primary">rpsM</name>
    <name evidence="1" type="synonym">rps13</name>
    <name type="ordered locus">P9215_18091</name>
</gene>
<evidence type="ECO:0000255" key="1">
    <source>
        <dbReference type="HAMAP-Rule" id="MF_01315"/>
    </source>
</evidence>
<evidence type="ECO:0000256" key="2">
    <source>
        <dbReference type="SAM" id="MobiDB-lite"/>
    </source>
</evidence>
<evidence type="ECO:0000305" key="3"/>
<protein>
    <recommendedName>
        <fullName evidence="1">Small ribosomal subunit protein uS13</fullName>
    </recommendedName>
    <alternativeName>
        <fullName evidence="3">30S ribosomal protein S13</fullName>
    </alternativeName>
</protein>
<accession>A8G741</accession>
<organism>
    <name type="scientific">Prochlorococcus marinus (strain MIT 9215)</name>
    <dbReference type="NCBI Taxonomy" id="93060"/>
    <lineage>
        <taxon>Bacteria</taxon>
        <taxon>Bacillati</taxon>
        <taxon>Cyanobacteriota</taxon>
        <taxon>Cyanophyceae</taxon>
        <taxon>Synechococcales</taxon>
        <taxon>Prochlorococcaceae</taxon>
        <taxon>Prochlorococcus</taxon>
    </lineage>
</organism>
<feature type="chain" id="PRO_1000067518" description="Small ribosomal subunit protein uS13">
    <location>
        <begin position="1"/>
        <end position="121"/>
    </location>
</feature>
<feature type="region of interest" description="Disordered" evidence="2">
    <location>
        <begin position="91"/>
        <end position="121"/>
    </location>
</feature>
<feature type="compositionally biased region" description="Basic residues" evidence="2">
    <location>
        <begin position="100"/>
        <end position="121"/>
    </location>
</feature>
<reference key="1">
    <citation type="journal article" date="2007" name="PLoS Genet.">
        <title>Patterns and implications of gene gain and loss in the evolution of Prochlorococcus.</title>
        <authorList>
            <person name="Kettler G.C."/>
            <person name="Martiny A.C."/>
            <person name="Huang K."/>
            <person name="Zucker J."/>
            <person name="Coleman M.L."/>
            <person name="Rodrigue S."/>
            <person name="Chen F."/>
            <person name="Lapidus A."/>
            <person name="Ferriera S."/>
            <person name="Johnson J."/>
            <person name="Steglich C."/>
            <person name="Church G.M."/>
            <person name="Richardson P."/>
            <person name="Chisholm S.W."/>
        </authorList>
    </citation>
    <scope>NUCLEOTIDE SEQUENCE [LARGE SCALE GENOMIC DNA]</scope>
    <source>
        <strain>MIT 9215</strain>
    </source>
</reference>